<keyword id="KW-0002">3D-structure</keyword>
<keyword id="KW-0903">Direct protein sequencing</keyword>
<keyword id="KW-0238">DNA-binding</keyword>
<keyword id="KW-0479">Metal-binding</keyword>
<keyword id="KW-0539">Nucleus</keyword>
<keyword id="KW-0597">Phosphoprotein</keyword>
<keyword id="KW-1185">Reference proteome</keyword>
<keyword id="KW-0804">Transcription</keyword>
<keyword id="KW-0805">Transcription regulation</keyword>
<keyword id="KW-0862">Zinc</keyword>
<keyword id="KW-0863">Zinc-finger</keyword>
<accession>P07273</accession>
<accession>D6VU96</accession>
<accession>P24535</accession>
<sequence length="309" mass="34843">MDSKEVLVHVKNLEKNKSNDAAVLEILHVLDKEFVPTEKLLRETKVGVEVNKFKKSTNVEISKLVKKMISSWKDAINKNKRSRQAQQHHQDHAPGNAEDKTTVGESVNGVQQPASSQSDAMKQDKYVSTKPRNSKNDGVDTAIYHHKLRDQVLKALYDVLAKESEHPPQSILHTAKAIESEMNKVNNCDTNEAAYKARYRIIYSNVISKNNPDLKHKIANGDITPEFLATCDAKDLAPAPLKQKIEEIAKQNLYNAQGATIERSVTDRFTCGKCKEKKVSYYQLQTRSADEPLTTFCTCEACGNRWKFS</sequence>
<evidence type="ECO:0000255" key="1">
    <source>
        <dbReference type="PROSITE-ProRule" id="PRU00472"/>
    </source>
</evidence>
<evidence type="ECO:0000255" key="2">
    <source>
        <dbReference type="PROSITE-ProRule" id="PRU00649"/>
    </source>
</evidence>
<evidence type="ECO:0000255" key="3">
    <source>
        <dbReference type="PROSITE-ProRule" id="PRU00651"/>
    </source>
</evidence>
<evidence type="ECO:0000256" key="4">
    <source>
        <dbReference type="SAM" id="MobiDB-lite"/>
    </source>
</evidence>
<evidence type="ECO:0000269" key="5">
    <source>
    </source>
</evidence>
<evidence type="ECO:0000305" key="6"/>
<evidence type="ECO:0007744" key="7">
    <source>
    </source>
</evidence>
<evidence type="ECO:0007829" key="8">
    <source>
        <dbReference type="PDB" id="1ENW"/>
    </source>
</evidence>
<evidence type="ECO:0007829" key="9">
    <source>
        <dbReference type="PDB" id="3PO3"/>
    </source>
</evidence>
<evidence type="ECO:0007829" key="10">
    <source>
        <dbReference type="PDB" id="7FAW"/>
    </source>
</evidence>
<feature type="chain" id="PRO_0000121443" description="Transcription elongation factor S-II">
    <location>
        <begin position="1"/>
        <end position="309"/>
    </location>
</feature>
<feature type="domain" description="TFIIS N-terminal" evidence="2">
    <location>
        <begin position="5"/>
        <end position="79"/>
    </location>
</feature>
<feature type="domain" description="TFIIS central" evidence="3">
    <location>
        <begin position="148"/>
        <end position="264"/>
    </location>
</feature>
<feature type="zinc finger region" description="TFIIS-type" evidence="1">
    <location>
        <begin position="267"/>
        <end position="307"/>
    </location>
</feature>
<feature type="region of interest" description="Disordered" evidence="4">
    <location>
        <begin position="78"/>
        <end position="142"/>
    </location>
</feature>
<feature type="compositionally biased region" description="Basic and acidic residues" evidence="4">
    <location>
        <begin position="88"/>
        <end position="102"/>
    </location>
</feature>
<feature type="compositionally biased region" description="Polar residues" evidence="4">
    <location>
        <begin position="103"/>
        <end position="120"/>
    </location>
</feature>
<feature type="binding site" evidence="1">
    <location>
        <position position="271"/>
    </location>
    <ligand>
        <name>Zn(2+)</name>
        <dbReference type="ChEBI" id="CHEBI:29105"/>
    </ligand>
</feature>
<feature type="binding site" evidence="1">
    <location>
        <position position="274"/>
    </location>
    <ligand>
        <name>Zn(2+)</name>
        <dbReference type="ChEBI" id="CHEBI:29105"/>
    </ligand>
</feature>
<feature type="binding site" evidence="1">
    <location>
        <position position="299"/>
    </location>
    <ligand>
        <name>Zn(2+)</name>
        <dbReference type="ChEBI" id="CHEBI:29105"/>
    </ligand>
</feature>
<feature type="binding site" evidence="1">
    <location>
        <position position="302"/>
    </location>
    <ligand>
        <name>Zn(2+)</name>
        <dbReference type="ChEBI" id="CHEBI:29105"/>
    </ligand>
</feature>
<feature type="modified residue" description="Phosphoserine" evidence="7">
    <location>
        <position position="116"/>
    </location>
</feature>
<feature type="sequence conflict" description="In Ref. 1; AAA88734/AAA34580." evidence="6" ref="1">
    <original>V</original>
    <variation>F</variation>
    <location>
        <position position="35"/>
    </location>
</feature>
<feature type="sequence conflict" description="In Ref. 1; AAA88734/AAA34580." evidence="6" ref="1">
    <original>DAIN</original>
    <variation>AQLI</variation>
    <location>
        <begin position="74"/>
        <end position="77"/>
    </location>
</feature>
<feature type="sequence conflict" description="In Ref. 1; AAA88734/AAA34580." evidence="6" ref="1">
    <original>S</original>
    <variation>C</variation>
    <location>
        <position position="82"/>
    </location>
</feature>
<feature type="sequence conflict" description="In Ref. 1; AAA88734/AAA34580." evidence="6" ref="1">
    <original>A</original>
    <variation>P</variation>
    <location>
        <position position="85"/>
    </location>
</feature>
<feature type="helix" evidence="10">
    <location>
        <begin position="3"/>
        <end position="15"/>
    </location>
</feature>
<feature type="turn" evidence="10">
    <location>
        <begin position="16"/>
        <end position="18"/>
    </location>
</feature>
<feature type="helix" evidence="10">
    <location>
        <begin position="20"/>
        <end position="33"/>
    </location>
</feature>
<feature type="helix" evidence="10">
    <location>
        <begin position="38"/>
        <end position="44"/>
    </location>
</feature>
<feature type="helix" evidence="10">
    <location>
        <begin position="46"/>
        <end position="51"/>
    </location>
</feature>
<feature type="helix" evidence="10">
    <location>
        <begin position="52"/>
        <end position="55"/>
    </location>
</feature>
<feature type="helix" evidence="10">
    <location>
        <begin position="59"/>
        <end position="73"/>
    </location>
</feature>
<feature type="turn" evidence="8">
    <location>
        <begin position="134"/>
        <end position="137"/>
    </location>
</feature>
<feature type="helix" evidence="9">
    <location>
        <begin position="147"/>
        <end position="159"/>
    </location>
</feature>
<feature type="strand" evidence="9">
    <location>
        <begin position="162"/>
        <end position="165"/>
    </location>
</feature>
<feature type="helix" evidence="9">
    <location>
        <begin position="170"/>
        <end position="185"/>
    </location>
</feature>
<feature type="strand" evidence="9">
    <location>
        <begin position="189"/>
        <end position="192"/>
    </location>
</feature>
<feature type="helix" evidence="9">
    <location>
        <begin position="194"/>
        <end position="207"/>
    </location>
</feature>
<feature type="strand" evidence="9">
    <location>
        <begin position="208"/>
        <end position="210"/>
    </location>
</feature>
<feature type="helix" evidence="9">
    <location>
        <begin position="213"/>
        <end position="220"/>
    </location>
</feature>
<feature type="helix" evidence="9">
    <location>
        <begin position="226"/>
        <end position="229"/>
    </location>
</feature>
<feature type="turn" evidence="9">
    <location>
        <begin position="232"/>
        <end position="235"/>
    </location>
</feature>
<feature type="helix" evidence="9">
    <location>
        <begin position="240"/>
        <end position="255"/>
    </location>
</feature>
<feature type="strand" evidence="9">
    <location>
        <begin position="266"/>
        <end position="269"/>
    </location>
</feature>
<feature type="strand" evidence="9">
    <location>
        <begin position="272"/>
        <end position="274"/>
    </location>
</feature>
<feature type="strand" evidence="9">
    <location>
        <begin position="297"/>
        <end position="299"/>
    </location>
</feature>
<feature type="turn" evidence="9">
    <location>
        <begin position="300"/>
        <end position="302"/>
    </location>
</feature>
<dbReference type="EMBL" id="M36724">
    <property type="protein sequence ID" value="AAA88734.1"/>
    <property type="molecule type" value="Genomic_DNA"/>
</dbReference>
<dbReference type="EMBL" id="D12478">
    <property type="protein sequence ID" value="BAA02046.1"/>
    <property type="molecule type" value="Genomic_DNA"/>
</dbReference>
<dbReference type="EMBL" id="M60770">
    <property type="protein sequence ID" value="AAA34580.1"/>
    <property type="molecule type" value="Genomic_DNA"/>
</dbReference>
<dbReference type="EMBL" id="Z72565">
    <property type="protein sequence ID" value="CAA96744.1"/>
    <property type="molecule type" value="Genomic_DNA"/>
</dbReference>
<dbReference type="EMBL" id="X00047">
    <property type="protein sequence ID" value="CAA24928.1"/>
    <property type="molecule type" value="Genomic_DNA"/>
</dbReference>
<dbReference type="EMBL" id="BK006941">
    <property type="protein sequence ID" value="DAA08057.1"/>
    <property type="molecule type" value="Genomic_DNA"/>
</dbReference>
<dbReference type="PIR" id="A42921">
    <property type="entry name" value="A42921"/>
</dbReference>
<dbReference type="RefSeq" id="NP_011472.1">
    <property type="nucleotide sequence ID" value="NM_001180908.1"/>
</dbReference>
<dbReference type="PDB" id="1ENW">
    <property type="method" value="NMR"/>
    <property type="chains" value="A=131-240"/>
</dbReference>
<dbReference type="PDB" id="1EO0">
    <property type="method" value="NMR"/>
    <property type="chains" value="A=1-77"/>
</dbReference>
<dbReference type="PDB" id="1PQV">
    <property type="method" value="X-ray"/>
    <property type="resolution" value="3.80 A"/>
    <property type="chains" value="S=1-309"/>
</dbReference>
<dbReference type="PDB" id="1Y1V">
    <property type="method" value="X-ray"/>
    <property type="resolution" value="3.80 A"/>
    <property type="chains" value="S=131-309"/>
</dbReference>
<dbReference type="PDB" id="1Y1Y">
    <property type="method" value="X-ray"/>
    <property type="resolution" value="4.00 A"/>
    <property type="chains" value="S=131-309"/>
</dbReference>
<dbReference type="PDB" id="3GTM">
    <property type="method" value="X-ray"/>
    <property type="resolution" value="3.80 A"/>
    <property type="chains" value="S=147-309"/>
</dbReference>
<dbReference type="PDB" id="3PO3">
    <property type="method" value="X-ray"/>
    <property type="resolution" value="3.30 A"/>
    <property type="chains" value="S=132-309"/>
</dbReference>
<dbReference type="PDB" id="5FMF">
    <property type="method" value="EM"/>
    <property type="resolution" value="6.00 A"/>
    <property type="chains" value="2=136-309"/>
</dbReference>
<dbReference type="PDB" id="7FAW">
    <property type="method" value="X-ray"/>
    <property type="resolution" value="2.44 A"/>
    <property type="chains" value="A/B/C=1-73"/>
</dbReference>
<dbReference type="PDB" id="7UI9">
    <property type="method" value="EM"/>
    <property type="resolution" value="3.30 A"/>
    <property type="chains" value="S=1-309"/>
</dbReference>
<dbReference type="PDB" id="7UIF">
    <property type="method" value="EM"/>
    <property type="resolution" value="4.60 A"/>
    <property type="chains" value="S=1-309"/>
</dbReference>
<dbReference type="PDB" id="7UIO">
    <property type="method" value="EM"/>
    <property type="resolution" value="3.30 A"/>
    <property type="chains" value="AS/BS=1-309"/>
</dbReference>
<dbReference type="PDB" id="8UMH">
    <property type="method" value="EM"/>
    <property type="resolution" value="4.10 A"/>
    <property type="chains" value="S=1-309"/>
</dbReference>
<dbReference type="PDB" id="8UMI">
    <property type="method" value="EM"/>
    <property type="resolution" value="3.70 A"/>
    <property type="chains" value="S=1-309"/>
</dbReference>
<dbReference type="PDB" id="8UOQ">
    <property type="method" value="EM"/>
    <property type="resolution" value="3.80 A"/>
    <property type="chains" value="S=1-309"/>
</dbReference>
<dbReference type="PDB" id="8UOT">
    <property type="method" value="EM"/>
    <property type="resolution" value="3.70 A"/>
    <property type="chains" value="S=1-309"/>
</dbReference>
<dbReference type="PDBsum" id="1ENW"/>
<dbReference type="PDBsum" id="1EO0"/>
<dbReference type="PDBsum" id="1PQV"/>
<dbReference type="PDBsum" id="1Y1V"/>
<dbReference type="PDBsum" id="1Y1Y"/>
<dbReference type="PDBsum" id="3GTM"/>
<dbReference type="PDBsum" id="3PO3"/>
<dbReference type="PDBsum" id="5FMF"/>
<dbReference type="PDBsum" id="7FAW"/>
<dbReference type="PDBsum" id="7UI9"/>
<dbReference type="PDBsum" id="7UIF"/>
<dbReference type="PDBsum" id="7UIO"/>
<dbReference type="PDBsum" id="8UMH"/>
<dbReference type="PDBsum" id="8UMI"/>
<dbReference type="PDBsum" id="8UOQ"/>
<dbReference type="PDBsum" id="8UOT"/>
<dbReference type="BMRB" id="P07273"/>
<dbReference type="EMDB" id="EMD-26542"/>
<dbReference type="EMDB" id="EMD-26544"/>
<dbReference type="EMDB" id="EMD-26551"/>
<dbReference type="EMDB" id="EMD-42437"/>
<dbReference type="EMDB" id="EMD-42438"/>
<dbReference type="SMR" id="P07273"/>
<dbReference type="BioGRID" id="33205">
    <property type="interactions" value="605"/>
</dbReference>
<dbReference type="DIP" id="DIP-2307N"/>
<dbReference type="FunCoup" id="P07273">
    <property type="interactions" value="1101"/>
</dbReference>
<dbReference type="IntAct" id="P07273">
    <property type="interactions" value="12"/>
</dbReference>
<dbReference type="MINT" id="P07273"/>
<dbReference type="STRING" id="4932.YGL043W"/>
<dbReference type="iPTMnet" id="P07273"/>
<dbReference type="PaxDb" id="4932-YGL043W"/>
<dbReference type="PeptideAtlas" id="P07273"/>
<dbReference type="EnsemblFungi" id="YGL043W_mRNA">
    <property type="protein sequence ID" value="YGL043W"/>
    <property type="gene ID" value="YGL043W"/>
</dbReference>
<dbReference type="GeneID" id="852839"/>
<dbReference type="KEGG" id="sce:YGL043W"/>
<dbReference type="AGR" id="SGD:S000003011"/>
<dbReference type="SGD" id="S000003011">
    <property type="gene designation" value="DST1"/>
</dbReference>
<dbReference type="VEuPathDB" id="FungiDB:YGL043W"/>
<dbReference type="eggNOG" id="KOG1105">
    <property type="taxonomic scope" value="Eukaryota"/>
</dbReference>
<dbReference type="HOGENOM" id="CLU_037637_1_0_1"/>
<dbReference type="InParanoid" id="P07273"/>
<dbReference type="OMA" id="RFVVMTH"/>
<dbReference type="OrthoDB" id="44867at2759"/>
<dbReference type="BioCyc" id="YEAST:G3O-30554-MONOMER"/>
<dbReference type="Reactome" id="R-SCE-6781823">
    <property type="pathway name" value="Formation of TC-NER Pre-Incision Complex"/>
</dbReference>
<dbReference type="Reactome" id="R-SCE-6782135">
    <property type="pathway name" value="Dual incision in TC-NER"/>
</dbReference>
<dbReference type="Reactome" id="R-SCE-6782210">
    <property type="pathway name" value="Gap-filling DNA repair synthesis and ligation in TC-NER"/>
</dbReference>
<dbReference type="Reactome" id="R-SCE-6796648">
    <property type="pathway name" value="TP53 Regulates Transcription of DNA Repair Genes"/>
</dbReference>
<dbReference type="BioGRID-ORCS" id="852839">
    <property type="hits" value="0 hits in 10 CRISPR screens"/>
</dbReference>
<dbReference type="EvolutionaryTrace" id="P07273"/>
<dbReference type="PRO" id="PR:P07273"/>
<dbReference type="Proteomes" id="UP000002311">
    <property type="component" value="Chromosome VII"/>
</dbReference>
<dbReference type="RNAct" id="P07273">
    <property type="molecule type" value="protein"/>
</dbReference>
<dbReference type="GO" id="GO:0005634">
    <property type="term" value="C:nucleus"/>
    <property type="evidence" value="ECO:0000314"/>
    <property type="project" value="SGD"/>
</dbReference>
<dbReference type="GO" id="GO:0000993">
    <property type="term" value="F:RNA polymerase II complex binding"/>
    <property type="evidence" value="ECO:0000353"/>
    <property type="project" value="SGD"/>
</dbReference>
<dbReference type="GO" id="GO:0001139">
    <property type="term" value="F:RNA polymerase II complex recruiting activity"/>
    <property type="evidence" value="ECO:0000315"/>
    <property type="project" value="SGD"/>
</dbReference>
<dbReference type="GO" id="GO:0000977">
    <property type="term" value="F:RNA polymerase II transcription regulatory region sequence-specific DNA binding"/>
    <property type="evidence" value="ECO:0000314"/>
    <property type="project" value="SGD"/>
</dbReference>
<dbReference type="GO" id="GO:0008270">
    <property type="term" value="F:zinc ion binding"/>
    <property type="evidence" value="ECO:0007669"/>
    <property type="project" value="UniProtKB-KW"/>
</dbReference>
<dbReference type="GO" id="GO:0001193">
    <property type="term" value="P:maintenance of transcriptional fidelity during transcription elongation by RNA polymerase II"/>
    <property type="evidence" value="ECO:0000315"/>
    <property type="project" value="SGD"/>
</dbReference>
<dbReference type="GO" id="GO:0045899">
    <property type="term" value="P:positive regulation of RNA polymerase II transcription preinitiation complex assembly"/>
    <property type="evidence" value="ECO:0000314"/>
    <property type="project" value="SGD"/>
</dbReference>
<dbReference type="GO" id="GO:0032968">
    <property type="term" value="P:positive regulation of transcription elongation by RNA polymerase II"/>
    <property type="evidence" value="ECO:0000314"/>
    <property type="project" value="SGD"/>
</dbReference>
<dbReference type="GO" id="GO:0031440">
    <property type="term" value="P:regulation of mRNA 3'-end processing"/>
    <property type="evidence" value="ECO:0000315"/>
    <property type="project" value="SGD"/>
</dbReference>
<dbReference type="GO" id="GO:0006357">
    <property type="term" value="P:regulation of transcription by RNA polymerase II"/>
    <property type="evidence" value="ECO:0000318"/>
    <property type="project" value="GO_Central"/>
</dbReference>
<dbReference type="GO" id="GO:0031564">
    <property type="term" value="P:transcription antitermination"/>
    <property type="evidence" value="ECO:0000314"/>
    <property type="project" value="SGD"/>
</dbReference>
<dbReference type="GO" id="GO:0006383">
    <property type="term" value="P:transcription by RNA polymerase III"/>
    <property type="evidence" value="ECO:0000314"/>
    <property type="project" value="SGD"/>
</dbReference>
<dbReference type="GO" id="GO:0006362">
    <property type="term" value="P:transcription elongation by RNA polymerase I"/>
    <property type="evidence" value="ECO:0000314"/>
    <property type="project" value="SGD"/>
</dbReference>
<dbReference type="GO" id="GO:0006368">
    <property type="term" value="P:transcription elongation by RNA polymerase II"/>
    <property type="evidence" value="ECO:0000314"/>
    <property type="project" value="SGD"/>
</dbReference>
<dbReference type="GO" id="GO:0006367">
    <property type="term" value="P:transcription initiation at RNA polymerase II promoter"/>
    <property type="evidence" value="ECO:0000314"/>
    <property type="project" value="SGD"/>
</dbReference>
<dbReference type="GO" id="GO:0042797">
    <property type="term" value="P:tRNA transcription by RNA polymerase III"/>
    <property type="evidence" value="ECO:0000315"/>
    <property type="project" value="SGD"/>
</dbReference>
<dbReference type="CDD" id="cd00183">
    <property type="entry name" value="TFIIS_I"/>
    <property type="match status" value="1"/>
</dbReference>
<dbReference type="CDD" id="cd13749">
    <property type="entry name" value="Zn-ribbon_TFIIS"/>
    <property type="match status" value="1"/>
</dbReference>
<dbReference type="FunFam" id="2.20.25.10:FF:000001">
    <property type="entry name" value="Probable Transcription elongation factor S-II"/>
    <property type="match status" value="1"/>
</dbReference>
<dbReference type="FunFam" id="1.10.472.30:FF:000006">
    <property type="entry name" value="Transcription elongation factor S-II"/>
    <property type="match status" value="1"/>
</dbReference>
<dbReference type="FunFam" id="1.20.930.10:FF:000007">
    <property type="entry name" value="Transcription elongation factor S-II"/>
    <property type="match status" value="1"/>
</dbReference>
<dbReference type="Gene3D" id="2.20.25.10">
    <property type="match status" value="1"/>
</dbReference>
<dbReference type="Gene3D" id="1.20.930.10">
    <property type="entry name" value="Conserved domain common to transcription factors TFIIS, elongin A, CRSP70"/>
    <property type="match status" value="1"/>
</dbReference>
<dbReference type="Gene3D" id="1.10.472.30">
    <property type="entry name" value="Transcription elongation factor S-II, central domain"/>
    <property type="match status" value="1"/>
</dbReference>
<dbReference type="InterPro" id="IPR035100">
    <property type="entry name" value="TF_IIS-typ"/>
</dbReference>
<dbReference type="InterPro" id="IPR003617">
    <property type="entry name" value="TFIIS/CRSP70_N_sub"/>
</dbReference>
<dbReference type="InterPro" id="IPR035441">
    <property type="entry name" value="TFIIS/LEDGF_dom_sf"/>
</dbReference>
<dbReference type="InterPro" id="IPR003618">
    <property type="entry name" value="TFIIS_cen_dom"/>
</dbReference>
<dbReference type="InterPro" id="IPR036575">
    <property type="entry name" value="TFIIS_cen_dom_sf"/>
</dbReference>
<dbReference type="InterPro" id="IPR017923">
    <property type="entry name" value="TFIIS_N"/>
</dbReference>
<dbReference type="InterPro" id="IPR006289">
    <property type="entry name" value="TFSII"/>
</dbReference>
<dbReference type="InterPro" id="IPR001222">
    <property type="entry name" value="Znf_TFIIS"/>
</dbReference>
<dbReference type="NCBIfam" id="TIGR01385">
    <property type="entry name" value="TFSII"/>
    <property type="match status" value="1"/>
</dbReference>
<dbReference type="PANTHER" id="PTHR11477:SF0">
    <property type="entry name" value="IP08861P-RELATED"/>
    <property type="match status" value="1"/>
</dbReference>
<dbReference type="PANTHER" id="PTHR11477">
    <property type="entry name" value="TRANSCRIPTION FACTOR S-II ZINC FINGER DOMAIN-CONTAINING PROTEIN"/>
    <property type="match status" value="1"/>
</dbReference>
<dbReference type="Pfam" id="PF08711">
    <property type="entry name" value="Med26"/>
    <property type="match status" value="1"/>
</dbReference>
<dbReference type="Pfam" id="PF07500">
    <property type="entry name" value="TFIIS_M"/>
    <property type="match status" value="1"/>
</dbReference>
<dbReference type="Pfam" id="PF01096">
    <property type="entry name" value="Zn_ribbon_TFIIS"/>
    <property type="match status" value="1"/>
</dbReference>
<dbReference type="PIRSF" id="PIRSF006704">
    <property type="entry name" value="TF_IIS"/>
    <property type="match status" value="1"/>
</dbReference>
<dbReference type="SMART" id="SM00510">
    <property type="entry name" value="TFS2M"/>
    <property type="match status" value="1"/>
</dbReference>
<dbReference type="SMART" id="SM00509">
    <property type="entry name" value="TFS2N"/>
    <property type="match status" value="1"/>
</dbReference>
<dbReference type="SMART" id="SM00440">
    <property type="entry name" value="ZnF_C2C2"/>
    <property type="match status" value="1"/>
</dbReference>
<dbReference type="SUPFAM" id="SSF47676">
    <property type="entry name" value="Conserved domain common to transcription factors TFIIS, elongin A, CRSP70"/>
    <property type="match status" value="1"/>
</dbReference>
<dbReference type="SUPFAM" id="SSF46942">
    <property type="entry name" value="Elongation factor TFIIS domain 2"/>
    <property type="match status" value="1"/>
</dbReference>
<dbReference type="SUPFAM" id="SSF57783">
    <property type="entry name" value="Zinc beta-ribbon"/>
    <property type="match status" value="1"/>
</dbReference>
<dbReference type="PROSITE" id="PS51321">
    <property type="entry name" value="TFIIS_CENTRAL"/>
    <property type="match status" value="1"/>
</dbReference>
<dbReference type="PROSITE" id="PS51319">
    <property type="entry name" value="TFIIS_N"/>
    <property type="match status" value="1"/>
</dbReference>
<dbReference type="PROSITE" id="PS00466">
    <property type="entry name" value="ZF_TFIIS_1"/>
    <property type="match status" value="1"/>
</dbReference>
<dbReference type="PROSITE" id="PS51133">
    <property type="entry name" value="ZF_TFIIS_2"/>
    <property type="match status" value="1"/>
</dbReference>
<gene>
    <name type="primary">DST1</name>
    <name type="synonym">PPR2</name>
    <name type="ordered locus">YGL043W</name>
</gene>
<name>TFS2_YEAST</name>
<organism>
    <name type="scientific">Saccharomyces cerevisiae (strain ATCC 204508 / S288c)</name>
    <name type="common">Baker's yeast</name>
    <dbReference type="NCBI Taxonomy" id="559292"/>
    <lineage>
        <taxon>Eukaryota</taxon>
        <taxon>Fungi</taxon>
        <taxon>Dikarya</taxon>
        <taxon>Ascomycota</taxon>
        <taxon>Saccharomycotina</taxon>
        <taxon>Saccharomycetes</taxon>
        <taxon>Saccharomycetales</taxon>
        <taxon>Saccharomycetaceae</taxon>
        <taxon>Saccharomyces</taxon>
    </lineage>
</organism>
<reference key="1">
    <citation type="journal article" date="1991" name="Mol. Cell. Biol.">
        <title>Isolation, DNA sequence, and regulation of a Saccharomyces cerevisiae gene that encodes DNA strand transfer protein alpha.</title>
        <authorList>
            <person name="Clark A.B."/>
            <person name="Dykstra C.C."/>
            <person name="Sugino A."/>
        </authorList>
    </citation>
    <scope>NUCLEOTIDE SEQUENCE [GENOMIC DNA]</scope>
    <scope>PROTEIN SEQUENCE OF 18-30</scope>
</reference>
<reference key="2">
    <citation type="journal article" date="1992" name="J. Biol. Chem.">
        <title>Purification, gene cloning, and gene disruption of the transcription elongation factor S-II in Saccharomyces cerevisiae.</title>
        <authorList>
            <person name="Nakanishi T."/>
            <person name="Nakano A."/>
            <person name="Sekimizu K."/>
            <person name="Natori S."/>
        </authorList>
    </citation>
    <scope>NUCLEOTIDE SEQUENCE [GENOMIC DNA]</scope>
</reference>
<reference key="3">
    <citation type="journal article" date="1997" name="Yeast">
        <title>The characterization of two new clusters of duplicated genes suggests a 'Lego' organization of the yeast Saccharomyces cerevisiae chromosomes.</title>
        <authorList>
            <person name="Feuermann M."/>
            <person name="de Montigny J."/>
            <person name="Potier S."/>
            <person name="Souciet J.-L."/>
        </authorList>
    </citation>
    <scope>NUCLEOTIDE SEQUENCE [GENOMIC DNA]</scope>
    <source>
        <strain>ATCC 204508 / S288c</strain>
    </source>
</reference>
<reference key="4">
    <citation type="journal article" date="1997" name="Nature">
        <title>The nucleotide sequence of Saccharomyces cerevisiae chromosome VII.</title>
        <authorList>
            <person name="Tettelin H."/>
            <person name="Agostoni-Carbone M.L."/>
            <person name="Albermann K."/>
            <person name="Albers M."/>
            <person name="Arroyo J."/>
            <person name="Backes U."/>
            <person name="Barreiros T."/>
            <person name="Bertani I."/>
            <person name="Bjourson A.J."/>
            <person name="Brueckner M."/>
            <person name="Bruschi C.V."/>
            <person name="Carignani G."/>
            <person name="Castagnoli L."/>
            <person name="Cerdan E."/>
            <person name="Clemente M.L."/>
            <person name="Coblenz A."/>
            <person name="Coglievina M."/>
            <person name="Coissac E."/>
            <person name="Defoor E."/>
            <person name="Del Bino S."/>
            <person name="Delius H."/>
            <person name="Delneri D."/>
            <person name="de Wergifosse P."/>
            <person name="Dujon B."/>
            <person name="Durand P."/>
            <person name="Entian K.-D."/>
            <person name="Eraso P."/>
            <person name="Escribano V."/>
            <person name="Fabiani L."/>
            <person name="Fartmann B."/>
            <person name="Feroli F."/>
            <person name="Feuermann M."/>
            <person name="Frontali L."/>
            <person name="Garcia-Gonzalez M."/>
            <person name="Garcia-Saez M.I."/>
            <person name="Goffeau A."/>
            <person name="Guerreiro P."/>
            <person name="Hani J."/>
            <person name="Hansen M."/>
            <person name="Hebling U."/>
            <person name="Hernandez K."/>
            <person name="Heumann K."/>
            <person name="Hilger F."/>
            <person name="Hofmann B."/>
            <person name="Indge K.J."/>
            <person name="James C.M."/>
            <person name="Klima R."/>
            <person name="Koetter P."/>
            <person name="Kramer B."/>
            <person name="Kramer W."/>
            <person name="Lauquin G."/>
            <person name="Leuther H."/>
            <person name="Louis E.J."/>
            <person name="Maillier E."/>
            <person name="Marconi A."/>
            <person name="Martegani E."/>
            <person name="Mazon M.J."/>
            <person name="Mazzoni C."/>
            <person name="McReynolds A.D.K."/>
            <person name="Melchioretto P."/>
            <person name="Mewes H.-W."/>
            <person name="Minenkova O."/>
            <person name="Mueller-Auer S."/>
            <person name="Nawrocki A."/>
            <person name="Netter P."/>
            <person name="Neu R."/>
            <person name="Nombela C."/>
            <person name="Oliver S.G."/>
            <person name="Panzeri L."/>
            <person name="Paoluzi S."/>
            <person name="Plevani P."/>
            <person name="Portetelle D."/>
            <person name="Portillo F."/>
            <person name="Potier S."/>
            <person name="Purnelle B."/>
            <person name="Rieger M."/>
            <person name="Riles L."/>
            <person name="Rinaldi T."/>
            <person name="Robben J."/>
            <person name="Rodrigues-Pousada C."/>
            <person name="Rodriguez-Belmonte E."/>
            <person name="Rodriguez-Torres A.M."/>
            <person name="Rose M."/>
            <person name="Ruzzi M."/>
            <person name="Saliola M."/>
            <person name="Sanchez-Perez M."/>
            <person name="Schaefer B."/>
            <person name="Schaefer M."/>
            <person name="Scharfe M."/>
            <person name="Schmidheini T."/>
            <person name="Schreer A."/>
            <person name="Skala J."/>
            <person name="Souciet J.-L."/>
            <person name="Steensma H.Y."/>
            <person name="Talla E."/>
            <person name="Thierry A."/>
            <person name="Vandenbol M."/>
            <person name="van der Aart Q.J.M."/>
            <person name="Van Dyck L."/>
            <person name="Vanoni M."/>
            <person name="Verhasselt P."/>
            <person name="Voet M."/>
            <person name="Volckaert G."/>
            <person name="Wambutt R."/>
            <person name="Watson M.D."/>
            <person name="Weber N."/>
            <person name="Wedler E."/>
            <person name="Wedler H."/>
            <person name="Wipfli P."/>
            <person name="Wolf K."/>
            <person name="Wright L.F."/>
            <person name="Zaccaria P."/>
            <person name="Zimmermann M."/>
            <person name="Zollner A."/>
            <person name="Kleine K."/>
        </authorList>
    </citation>
    <scope>NUCLEOTIDE SEQUENCE [LARGE SCALE GENOMIC DNA]</scope>
    <source>
        <strain>ATCC 204508 / S288c</strain>
    </source>
</reference>
<reference key="5">
    <citation type="journal article" date="2014" name="G3 (Bethesda)">
        <title>The reference genome sequence of Saccharomyces cerevisiae: Then and now.</title>
        <authorList>
            <person name="Engel S.R."/>
            <person name="Dietrich F.S."/>
            <person name="Fisk D.G."/>
            <person name="Binkley G."/>
            <person name="Balakrishnan R."/>
            <person name="Costanzo M.C."/>
            <person name="Dwight S.S."/>
            <person name="Hitz B.C."/>
            <person name="Karra K."/>
            <person name="Nash R.S."/>
            <person name="Weng S."/>
            <person name="Wong E.D."/>
            <person name="Lloyd P."/>
            <person name="Skrzypek M.S."/>
            <person name="Miyasato S.R."/>
            <person name="Simison M."/>
            <person name="Cherry J.M."/>
        </authorList>
    </citation>
    <scope>GENOME REANNOTATION</scope>
    <source>
        <strain>ATCC 204508 / S288c</strain>
    </source>
</reference>
<reference key="6">
    <citation type="journal article" date="1983" name="EMBO J.">
        <title>Complete sequence of a eukaryotic regulatory gene.</title>
        <authorList>
            <person name="Hubert J.-C."/>
            <person name="Guyonvarch A."/>
            <person name="Kammerer B."/>
            <person name="Exinger F."/>
            <person name="Liljelund P."/>
            <person name="Lacroute F."/>
        </authorList>
    </citation>
    <scope>NUCLEOTIDE SEQUENCE [GENOMIC DNA] OF 182-309</scope>
</reference>
<reference key="7">
    <citation type="journal article" date="1990" name="Nature">
        <title>Homologue of TFIIS in yeast.</title>
        <authorList>
            <person name="Davies C.J."/>
            <person name="Trgovchich J."/>
            <person name="Hutchison C.A. III"/>
        </authorList>
    </citation>
    <scope>SIMILARITY TO S-II</scope>
</reference>
<reference key="8">
    <citation type="journal article" date="1991" name="Nature">
        <title>TFIIS and strand-transfer proteins.</title>
        <authorList>
            <person name="Kipling D."/>
            <person name="Kearsey S.E."/>
        </authorList>
    </citation>
    <scope>IDENTITY OF PPR2 AND DST1</scope>
</reference>
<reference key="9">
    <citation type="journal article" date="2003" name="Nature">
        <title>Global analysis of protein expression in yeast.</title>
        <authorList>
            <person name="Ghaemmaghami S."/>
            <person name="Huh W.-K."/>
            <person name="Bower K."/>
            <person name="Howson R.W."/>
            <person name="Belle A."/>
            <person name="Dephoure N."/>
            <person name="O'Shea E.K."/>
            <person name="Weissman J.S."/>
        </authorList>
    </citation>
    <scope>LEVEL OF PROTEIN EXPRESSION [LARGE SCALE ANALYSIS]</scope>
</reference>
<reference key="10">
    <citation type="journal article" date="2008" name="Mol. Cell. Proteomics">
        <title>A multidimensional chromatography technology for in-depth phosphoproteome analysis.</title>
        <authorList>
            <person name="Albuquerque C.P."/>
            <person name="Smolka M.B."/>
            <person name="Payne S.H."/>
            <person name="Bafna V."/>
            <person name="Eng J."/>
            <person name="Zhou H."/>
        </authorList>
    </citation>
    <scope>IDENTIFICATION BY MASS SPECTROMETRY [LARGE SCALE ANALYSIS]</scope>
</reference>
<reference key="11">
    <citation type="journal article" date="2009" name="Science">
        <title>Global analysis of Cdk1 substrate phosphorylation sites provides insights into evolution.</title>
        <authorList>
            <person name="Holt L.J."/>
            <person name="Tuch B.B."/>
            <person name="Villen J."/>
            <person name="Johnson A.D."/>
            <person name="Gygi S.P."/>
            <person name="Morgan D.O."/>
        </authorList>
    </citation>
    <scope>PHOSPHORYLATION [LARGE SCALE ANALYSIS] AT SER-116</scope>
    <scope>IDENTIFICATION BY MASS SPECTROMETRY [LARGE SCALE ANALYSIS]</scope>
</reference>
<proteinExistence type="evidence at protein level"/>
<protein>
    <recommendedName>
        <fullName>Transcription elongation factor S-II</fullName>
    </recommendedName>
    <alternativeName>
        <fullName>DNA strand transfer protein alpha</fullName>
        <shortName>STP-alpha</shortName>
    </alternativeName>
    <alternativeName>
        <fullName>DNA strand transferase 1</fullName>
    </alternativeName>
    <alternativeName>
        <fullName>Pyrimidine pathway regulatory protein 2</fullName>
    </alternativeName>
</protein>
<comment type="function">
    <text>Necessary for efficient RNA polymerase II transcription elongation past template-encoded arresting sites. The arresting sites in DNA have the property of trapping a certain fraction of elongating RNA polymerases that pass through, resulting in locked ternary complexes. Cleavage of the nascent transcript by S-II allows the resumption of elongation from the new 3'-terminus.</text>
</comment>
<comment type="function">
    <text>Can promote the transfer of one strand of a double-stranded DNA molecule to a homologous single strand and thus may be involved in recombination.</text>
</comment>
<comment type="interaction">
    <interactant intactId="EBI-19168">
        <id>P07273</id>
    </interactant>
    <interactant intactId="EBI-17964">
        <id>P38915</id>
        <label>SPT8</label>
    </interactant>
    <organismsDiffer>false</organismsDiffer>
    <experiments>2</experiments>
</comment>
<comment type="interaction">
    <interactant intactId="EBI-19168">
        <id>P07273</id>
    </interactant>
    <interactant intactId="EBI-18059">
        <id>P38931</id>
        <label>SSN2</label>
    </interactant>
    <organismsDiffer>false</organismsDiffer>
    <experiments>2</experiments>
</comment>
<comment type="subcellular location">
    <subcellularLocation>
        <location>Nucleus</location>
    </subcellularLocation>
</comment>
<comment type="miscellaneous">
    <text>S-II binds to RNA-polymerase II in the absence of transcription.</text>
</comment>
<comment type="miscellaneous">
    <text evidence="5">Present with 6260 molecules/cell in log phase SD medium.</text>
</comment>
<comment type="similarity">
    <text evidence="6">Belongs to the TFS-II family.</text>
</comment>